<organism>
    <name type="scientific">Chlamydomonas reinhardtii</name>
    <name type="common">Chlamydomonas smithii</name>
    <dbReference type="NCBI Taxonomy" id="3055"/>
    <lineage>
        <taxon>Eukaryota</taxon>
        <taxon>Viridiplantae</taxon>
        <taxon>Chlorophyta</taxon>
        <taxon>core chlorophytes</taxon>
        <taxon>Chlorophyceae</taxon>
        <taxon>CS clade</taxon>
        <taxon>Chlamydomonadales</taxon>
        <taxon>Chlamydomonadaceae</taxon>
        <taxon>Chlamydomonas</taxon>
    </lineage>
</organism>
<feature type="initiator methionine" description="Removed" evidence="3">
    <location>
        <position position="1"/>
    </location>
</feature>
<feature type="chain" id="PRO_0000146396" description="Small ribosomal subunit protein uS12c">
    <location>
        <begin position="2"/>
        <end position="133"/>
    </location>
</feature>
<feature type="mutagenesis site" description="Streptomycin resistance." evidence="4">
    <original>K</original>
    <variation>T</variation>
    <location>
        <position position="14"/>
    </location>
</feature>
<feature type="mutagenesis site" description="Streptomycin dependence." evidence="4">
    <original>P</original>
    <variation>L</variation>
    <location>
        <position position="91"/>
    </location>
</feature>
<geneLocation type="chloroplast"/>
<protein>
    <recommendedName>
        <fullName evidence="2">Small ribosomal subunit protein uS12c</fullName>
    </recommendedName>
    <alternativeName>
        <fullName>30S ribosomal protein S12, chloroplastic</fullName>
    </alternativeName>
</protein>
<gene>
    <name type="primary">rps12</name>
</gene>
<comment type="function">
    <text evidence="1">With S4 and S5 plays an important role in translational accuracy. Located at the interface of the 30S and 50S subunits (By similarity).</text>
</comment>
<comment type="subunit">
    <text>Part of the 30S ribosomal subunit.</text>
</comment>
<comment type="subcellular location">
    <subcellularLocation>
        <location>Plastid</location>
        <location>Chloroplast</location>
    </subcellularLocation>
</comment>
<comment type="similarity">
    <text evidence="5">Belongs to the universal ribosomal protein uS12 family.</text>
</comment>
<dbReference type="EMBL" id="M29284">
    <property type="protein sequence ID" value="AAA84155.1"/>
    <property type="molecule type" value="Genomic_DNA"/>
</dbReference>
<dbReference type="EMBL" id="AF061851">
    <property type="protein sequence ID" value="AAC16329.1"/>
    <property type="molecule type" value="Genomic_DNA"/>
</dbReference>
<dbReference type="EMBL" id="FJ423446">
    <property type="protein sequence ID" value="ACJ50147.1"/>
    <property type="molecule type" value="Genomic_DNA"/>
</dbReference>
<dbReference type="EMBL" id="BK000554">
    <property type="protein sequence ID" value="DAA00960.1"/>
    <property type="molecule type" value="Genomic_DNA"/>
</dbReference>
<dbReference type="PIR" id="A34248">
    <property type="entry name" value="A34248"/>
</dbReference>
<dbReference type="RefSeq" id="NP_958416.1">
    <property type="nucleotide sequence ID" value="NC_005353.1"/>
</dbReference>
<dbReference type="SMR" id="P14149"/>
<dbReference type="FunCoup" id="P14149">
    <property type="interactions" value="1106"/>
</dbReference>
<dbReference type="STRING" id="3055.P14149"/>
<dbReference type="PaxDb" id="3055-DAA00960"/>
<dbReference type="GeneID" id="2717036"/>
<dbReference type="KEGG" id="cre:ChreCp060"/>
<dbReference type="eggNOG" id="KOG1750">
    <property type="taxonomic scope" value="Eukaryota"/>
</dbReference>
<dbReference type="HOGENOM" id="CLU_104295_1_2_1"/>
<dbReference type="InParanoid" id="P14149"/>
<dbReference type="Proteomes" id="UP000006906">
    <property type="component" value="Chloroplast"/>
</dbReference>
<dbReference type="GO" id="GO:0009507">
    <property type="term" value="C:chloroplast"/>
    <property type="evidence" value="ECO:0007669"/>
    <property type="project" value="UniProtKB-SubCell"/>
</dbReference>
<dbReference type="GO" id="GO:0005840">
    <property type="term" value="C:ribosome"/>
    <property type="evidence" value="ECO:0000318"/>
    <property type="project" value="GO_Central"/>
</dbReference>
<dbReference type="GO" id="GO:0015935">
    <property type="term" value="C:small ribosomal subunit"/>
    <property type="evidence" value="ECO:0007669"/>
    <property type="project" value="InterPro"/>
</dbReference>
<dbReference type="GO" id="GO:0019843">
    <property type="term" value="F:rRNA binding"/>
    <property type="evidence" value="ECO:0007669"/>
    <property type="project" value="UniProtKB-UniRule"/>
</dbReference>
<dbReference type="GO" id="GO:0003735">
    <property type="term" value="F:structural constituent of ribosome"/>
    <property type="evidence" value="ECO:0000318"/>
    <property type="project" value="GO_Central"/>
</dbReference>
<dbReference type="GO" id="GO:0046677">
    <property type="term" value="P:response to antibiotic"/>
    <property type="evidence" value="ECO:0007669"/>
    <property type="project" value="UniProtKB-KW"/>
</dbReference>
<dbReference type="GO" id="GO:0006412">
    <property type="term" value="P:translation"/>
    <property type="evidence" value="ECO:0000318"/>
    <property type="project" value="GO_Central"/>
</dbReference>
<dbReference type="CDD" id="cd03368">
    <property type="entry name" value="Ribosomal_S12"/>
    <property type="match status" value="1"/>
</dbReference>
<dbReference type="FunFam" id="2.40.50.140:FF:000001">
    <property type="entry name" value="30S ribosomal protein S12"/>
    <property type="match status" value="1"/>
</dbReference>
<dbReference type="Gene3D" id="2.40.50.140">
    <property type="entry name" value="Nucleic acid-binding proteins"/>
    <property type="match status" value="1"/>
</dbReference>
<dbReference type="HAMAP" id="MF_00403_B">
    <property type="entry name" value="Ribosomal_uS12_B"/>
    <property type="match status" value="1"/>
</dbReference>
<dbReference type="InterPro" id="IPR012340">
    <property type="entry name" value="NA-bd_OB-fold"/>
</dbReference>
<dbReference type="InterPro" id="IPR006032">
    <property type="entry name" value="Ribosomal_uS12"/>
</dbReference>
<dbReference type="InterPro" id="IPR005679">
    <property type="entry name" value="Ribosomal_uS12_bac"/>
</dbReference>
<dbReference type="NCBIfam" id="TIGR00981">
    <property type="entry name" value="rpsL_bact"/>
    <property type="match status" value="1"/>
</dbReference>
<dbReference type="PANTHER" id="PTHR11652">
    <property type="entry name" value="30S RIBOSOMAL PROTEIN S12 FAMILY MEMBER"/>
    <property type="match status" value="1"/>
</dbReference>
<dbReference type="Pfam" id="PF00164">
    <property type="entry name" value="Ribosom_S12_S23"/>
    <property type="match status" value="1"/>
</dbReference>
<dbReference type="PIRSF" id="PIRSF002133">
    <property type="entry name" value="Ribosomal_S12/S23"/>
    <property type="match status" value="1"/>
</dbReference>
<dbReference type="PRINTS" id="PR01034">
    <property type="entry name" value="RIBOSOMALS12"/>
</dbReference>
<dbReference type="SUPFAM" id="SSF50249">
    <property type="entry name" value="Nucleic acid-binding proteins"/>
    <property type="match status" value="1"/>
</dbReference>
<dbReference type="PROSITE" id="PS00055">
    <property type="entry name" value="RIBOSOMAL_S12"/>
    <property type="match status" value="1"/>
</dbReference>
<name>RR12_CHLRE</name>
<keyword id="KW-0046">Antibiotic resistance</keyword>
<keyword id="KW-0150">Chloroplast</keyword>
<keyword id="KW-0903">Direct protein sequencing</keyword>
<keyword id="KW-0934">Plastid</keyword>
<keyword id="KW-1185">Reference proteome</keyword>
<keyword id="KW-0687">Ribonucleoprotein</keyword>
<keyword id="KW-0689">Ribosomal protein</keyword>
<keyword id="KW-0694">RNA-binding</keyword>
<keyword id="KW-0699">rRNA-binding</keyword>
<evidence type="ECO:0000250" key="1"/>
<evidence type="ECO:0000255" key="2">
    <source>
        <dbReference type="HAMAP-Rule" id="MF_00403"/>
    </source>
</evidence>
<evidence type="ECO:0000269" key="3">
    <source>
    </source>
</evidence>
<evidence type="ECO:0000269" key="4">
    <source>
    </source>
</evidence>
<evidence type="ECO:0000305" key="5"/>
<reference key="1">
    <citation type="journal article" date="1989" name="J. Biol. Chem.">
        <title>Chloroplast ribosomal protein gene rps12 of Chlamydomonas reinhardtii. Wild-type sequence, mutation to streptomycin resistance and dependence, and function in Escherichia coli.</title>
        <authorList>
            <person name="Liu X.-Q."/>
            <person name="Gillham N.W."/>
            <person name="Boynton J.E."/>
        </authorList>
    </citation>
    <scope>NUCLEOTIDE SEQUENCE [GENOMIC DNA]</scope>
    <scope>STREPTOMYCIN RESISTANT MUTANTS</scope>
    <scope>MUTAGENESIS OF LYS-14 AND PRO-91</scope>
</reference>
<reference key="2">
    <citation type="submission" date="1998-04" db="EMBL/GenBank/DDBJ databases">
        <authorList>
            <person name="Hauser C.R."/>
            <person name="Boynton J.E."/>
            <person name="Gillham N.W."/>
        </authorList>
    </citation>
    <scope>NUCLEOTIDE SEQUENCE [GENOMIC DNA]</scope>
</reference>
<reference key="3">
    <citation type="journal article" date="2009" name="BMC Evol. Biol.">
        <title>Nucleotide diversity of the Chlamydomonas reinhardtii plastid genome: addressing the mutational-hazard hypothesis.</title>
        <authorList>
            <person name="Smith D.R."/>
            <person name="Lee R.W."/>
        </authorList>
    </citation>
    <scope>NUCLEOTIDE SEQUENCE [LARGE SCALE GENOMIC DNA]</scope>
    <source>
        <strain>CC-503</strain>
    </source>
</reference>
<reference key="4">
    <citation type="journal article" date="2002" name="Plant Cell">
        <title>Proteomic characterization of the small subunit of Chlamydomonas reinhardtii chloroplast ribosome: identification of a novel S1 domain-containing protein and unusually large orthologs of bacterial S2, S3, and S5.</title>
        <authorList>
            <person name="Yamaguchi K."/>
            <person name="Prieto S."/>
            <person name="Beligni M.V."/>
            <person name="Haynes P.A."/>
            <person name="McDonald W.H."/>
            <person name="Yates J.R. III"/>
            <person name="Mayfield S.P."/>
        </authorList>
    </citation>
    <scope>PROTEIN SEQUENCE OF 2-9</scope>
    <source>
        <strain>Arg7/cw15</strain>
    </source>
</reference>
<reference key="5">
    <citation type="journal article" date="2002" name="Plant Cell">
        <title>The Chlamydomonas reinhardtii plastid chromosome: islands of genes in a sea of repeats.</title>
        <authorList>
            <person name="Maul J.E."/>
            <person name="Lilly J.W."/>
            <person name="Cui L."/>
            <person name="dePamphilis C.W."/>
            <person name="Miller W."/>
            <person name="Harris E.H."/>
            <person name="Stern D.B."/>
        </authorList>
    </citation>
    <scope>IDENTIFICATION</scope>
    <scope>COMPLETE PLASTID GENOME</scope>
</reference>
<accession>P14149</accession>
<accession>B7U1K0</accession>
<sequence>MPTIQQLIRSARKKITKKTKSPALKSCPQRRGICLRVYTVTPKKPNSALRKVARVRLTTGFEVTAYIPGVGHNLQEHAVVLVRGGRVKDLPGVRYHIVRGSLDTAGVKNRVQSRSKYGVKMGSKTAAKTAGKK</sequence>
<proteinExistence type="evidence at protein level"/>